<proteinExistence type="evidence at protein level"/>
<organism>
    <name type="scientific">Rattus norvegicus</name>
    <name type="common">Rat</name>
    <dbReference type="NCBI Taxonomy" id="10116"/>
    <lineage>
        <taxon>Eukaryota</taxon>
        <taxon>Metazoa</taxon>
        <taxon>Chordata</taxon>
        <taxon>Craniata</taxon>
        <taxon>Vertebrata</taxon>
        <taxon>Euteleostomi</taxon>
        <taxon>Mammalia</taxon>
        <taxon>Eutheria</taxon>
        <taxon>Euarchontoglires</taxon>
        <taxon>Glires</taxon>
        <taxon>Rodentia</taxon>
        <taxon>Myomorpha</taxon>
        <taxon>Muroidea</taxon>
        <taxon>Muridae</taxon>
        <taxon>Murinae</taxon>
        <taxon>Rattus</taxon>
    </lineage>
</organism>
<accession>Q62728</accession>
<accession>Q62732</accession>
<reference key="1">
    <citation type="journal article" date="1994" name="FEBS Lett.">
        <title>Identification of a novel protein tyrosine phosphatase with sequence homology to the cytoskeletal proteins of the band 4.1 family.</title>
        <authorList>
            <person name="L'Abbe D."/>
            <person name="Banville D."/>
            <person name="Tong Y."/>
            <person name="Stocco R."/>
            <person name="Masson S."/>
            <person name="Ma S."/>
            <person name="Fantus G."/>
            <person name="Shen S.H."/>
        </authorList>
    </citation>
    <scope>NUCLEOTIDE SEQUENCE [MRNA] (ISOFORMS 1 AND 2E)</scope>
    <source>
        <strain>Sprague-Dawley</strain>
    </source>
</reference>
<reference key="2">
    <citation type="journal article" date="2012" name="Nat. Commun.">
        <title>Quantitative maps of protein phosphorylation sites across 14 different rat organs and tissues.</title>
        <authorList>
            <person name="Lundby A."/>
            <person name="Secher A."/>
            <person name="Lage K."/>
            <person name="Nordsborg N.B."/>
            <person name="Dmytriyev A."/>
            <person name="Lundby C."/>
            <person name="Olsen J.V."/>
        </authorList>
    </citation>
    <scope>PHOSPHORYLATION [LARGE SCALE ANALYSIS] AT SER-637; SER-710 AND SER-711</scope>
    <scope>IDENTIFICATION BY MASS SPECTROMETRY [LARGE SCALE ANALYSIS]</scope>
</reference>
<feature type="chain" id="PRO_0000219441" description="Tyrosine-protein phosphatase non-receptor type 21">
    <location>
        <begin position="1"/>
        <end position="1175"/>
    </location>
</feature>
<feature type="domain" description="FERM" evidence="4">
    <location>
        <begin position="23"/>
        <end position="308"/>
    </location>
</feature>
<feature type="domain" description="Tyrosine-protein phosphatase" evidence="5">
    <location>
        <begin position="897"/>
        <end position="1168"/>
    </location>
</feature>
<feature type="region of interest" description="Disordered" evidence="7">
    <location>
        <begin position="395"/>
        <end position="445"/>
    </location>
</feature>
<feature type="region of interest" description="Disordered" evidence="7">
    <location>
        <begin position="663"/>
        <end position="702"/>
    </location>
</feature>
<feature type="compositionally biased region" description="Polar residues" evidence="7">
    <location>
        <begin position="395"/>
        <end position="421"/>
    </location>
</feature>
<feature type="active site" description="Phosphocysteine intermediate" evidence="5 6">
    <location>
        <position position="1109"/>
    </location>
</feature>
<feature type="binding site" evidence="3">
    <location>
        <position position="1068"/>
    </location>
    <ligand>
        <name>substrate</name>
    </ligand>
</feature>
<feature type="binding site" evidence="1">
    <location>
        <begin position="1109"/>
        <end position="1115"/>
    </location>
    <ligand>
        <name>substrate</name>
    </ligand>
</feature>
<feature type="binding site" evidence="1">
    <location>
        <position position="1153"/>
    </location>
    <ligand>
        <name>substrate</name>
    </ligand>
</feature>
<feature type="modified residue" description="Phosphoserine" evidence="2">
    <location>
        <position position="577"/>
    </location>
</feature>
<feature type="modified residue" description="Phosphoserine" evidence="2">
    <location>
        <position position="589"/>
    </location>
</feature>
<feature type="modified residue" description="Phosphoserine" evidence="2">
    <location>
        <position position="590"/>
    </location>
</feature>
<feature type="modified residue" description="Phosphoserine" evidence="10">
    <location>
        <position position="637"/>
    </location>
</feature>
<feature type="modified residue" description="Phosphoserine" evidence="2">
    <location>
        <position position="673"/>
    </location>
</feature>
<feature type="modified residue" description="Phosphoserine" evidence="10">
    <location>
        <position position="710"/>
    </location>
</feature>
<feature type="modified residue" description="Phosphoserine" evidence="10">
    <location>
        <position position="711"/>
    </location>
</feature>
<feature type="modified residue" description="Phosphoserine" evidence="2">
    <location>
        <position position="798"/>
    </location>
</feature>
<feature type="modified residue" description="Phosphoserine" evidence="2">
    <location>
        <position position="800"/>
    </location>
</feature>
<feature type="modified residue" description="Phosphoserine" evidence="2">
    <location>
        <position position="805"/>
    </location>
</feature>
<feature type="splice variant" id="VSP_000498" description="In isoform 2E." evidence="8">
    <location>
        <begin position="1"/>
        <end position="839"/>
    </location>
</feature>
<gene>
    <name type="primary">Ptpn21</name>
    <name type="synonym">Ptp2e</name>
</gene>
<dbReference type="EC" id="3.1.3.48"/>
<dbReference type="EMBL" id="U17971">
    <property type="protein sequence ID" value="AAA62153.1"/>
    <property type="molecule type" value="mRNA"/>
</dbReference>
<dbReference type="EMBL" id="U18293">
    <property type="protein sequence ID" value="AAA62154.1"/>
    <property type="molecule type" value="mRNA"/>
</dbReference>
<dbReference type="PIR" id="S51005">
    <property type="entry name" value="S51005"/>
</dbReference>
<dbReference type="RefSeq" id="NP_598229.1">
    <property type="nucleotide sequence ID" value="NM_133545.1"/>
</dbReference>
<dbReference type="SMR" id="Q62728"/>
<dbReference type="BioGRID" id="251084">
    <property type="interactions" value="1"/>
</dbReference>
<dbReference type="FunCoup" id="Q62728">
    <property type="interactions" value="589"/>
</dbReference>
<dbReference type="STRING" id="10116.ENSRNOP00000068645"/>
<dbReference type="iPTMnet" id="Q62728"/>
<dbReference type="PhosphoSitePlus" id="Q62728"/>
<dbReference type="PaxDb" id="10116-ENSRNOP00000059572"/>
<dbReference type="GeneID" id="171070"/>
<dbReference type="KEGG" id="rno:171070"/>
<dbReference type="UCSC" id="RGD:620216">
    <molecule id="Q62728-1"/>
    <property type="organism name" value="rat"/>
</dbReference>
<dbReference type="AGR" id="RGD:620216"/>
<dbReference type="CTD" id="11099"/>
<dbReference type="RGD" id="620216">
    <property type="gene designation" value="Ptpn21"/>
</dbReference>
<dbReference type="eggNOG" id="KOG0792">
    <property type="taxonomic scope" value="Eukaryota"/>
</dbReference>
<dbReference type="InParanoid" id="Q62728"/>
<dbReference type="PhylomeDB" id="Q62728"/>
<dbReference type="PRO" id="PR:Q62728"/>
<dbReference type="Proteomes" id="UP000002494">
    <property type="component" value="Unplaced"/>
</dbReference>
<dbReference type="GO" id="GO:0005737">
    <property type="term" value="C:cytoplasm"/>
    <property type="evidence" value="ECO:0000318"/>
    <property type="project" value="GO_Central"/>
</dbReference>
<dbReference type="GO" id="GO:0005856">
    <property type="term" value="C:cytoskeleton"/>
    <property type="evidence" value="ECO:0007669"/>
    <property type="project" value="UniProtKB-SubCell"/>
</dbReference>
<dbReference type="GO" id="GO:0004725">
    <property type="term" value="F:protein tyrosine phosphatase activity"/>
    <property type="evidence" value="ECO:0000314"/>
    <property type="project" value="RGD"/>
</dbReference>
<dbReference type="GO" id="GO:0007010">
    <property type="term" value="P:cytoskeleton organization"/>
    <property type="evidence" value="ECO:0000303"/>
    <property type="project" value="RGD"/>
</dbReference>
<dbReference type="CDD" id="cd14473">
    <property type="entry name" value="FERM_B-lobe"/>
    <property type="match status" value="1"/>
</dbReference>
<dbReference type="CDD" id="cd13188">
    <property type="entry name" value="FERM_C_PTPN14_PTPN21"/>
    <property type="match status" value="1"/>
</dbReference>
<dbReference type="CDD" id="cd17192">
    <property type="entry name" value="FERM_F1_PTPN21"/>
    <property type="match status" value="1"/>
</dbReference>
<dbReference type="FunFam" id="1.20.80.10:FF:000014">
    <property type="entry name" value="Tyrosine-protein phosphatase non-receptor type"/>
    <property type="match status" value="1"/>
</dbReference>
<dbReference type="FunFam" id="2.30.29.30:FF:000149">
    <property type="entry name" value="Tyrosine-protein phosphatase non-receptor type"/>
    <property type="match status" value="1"/>
</dbReference>
<dbReference type="FunFam" id="3.10.20.90:FF:000039">
    <property type="entry name" value="Tyrosine-protein phosphatase non-receptor type"/>
    <property type="match status" value="1"/>
</dbReference>
<dbReference type="FunFam" id="3.90.190.10:FF:000030">
    <property type="entry name" value="Tyrosine-protein phosphatase non-receptor type"/>
    <property type="match status" value="1"/>
</dbReference>
<dbReference type="Gene3D" id="1.20.80.10">
    <property type="match status" value="1"/>
</dbReference>
<dbReference type="Gene3D" id="3.10.20.90">
    <property type="entry name" value="Phosphatidylinositol 3-kinase Catalytic Subunit, Chain A, domain 1"/>
    <property type="match status" value="1"/>
</dbReference>
<dbReference type="Gene3D" id="2.30.29.30">
    <property type="entry name" value="Pleckstrin-homology domain (PH domain)/Phosphotyrosine-binding domain (PTB)"/>
    <property type="match status" value="1"/>
</dbReference>
<dbReference type="Gene3D" id="3.90.190.10">
    <property type="entry name" value="Protein tyrosine phosphatase superfamily"/>
    <property type="match status" value="1"/>
</dbReference>
<dbReference type="InterPro" id="IPR019749">
    <property type="entry name" value="Band_41_domain"/>
</dbReference>
<dbReference type="InterPro" id="IPR014352">
    <property type="entry name" value="FERM/acyl-CoA-bd_prot_sf"/>
</dbReference>
<dbReference type="InterPro" id="IPR035963">
    <property type="entry name" value="FERM_2"/>
</dbReference>
<dbReference type="InterPro" id="IPR019748">
    <property type="entry name" value="FERM_central"/>
</dbReference>
<dbReference type="InterPro" id="IPR019747">
    <property type="entry name" value="FERM_CS"/>
</dbReference>
<dbReference type="InterPro" id="IPR000299">
    <property type="entry name" value="FERM_domain"/>
</dbReference>
<dbReference type="InterPro" id="IPR018979">
    <property type="entry name" value="FERM_N"/>
</dbReference>
<dbReference type="InterPro" id="IPR018980">
    <property type="entry name" value="FERM_PH-like_C"/>
</dbReference>
<dbReference type="InterPro" id="IPR011993">
    <property type="entry name" value="PH-like_dom_sf"/>
</dbReference>
<dbReference type="InterPro" id="IPR029021">
    <property type="entry name" value="Prot-tyrosine_phosphatase-like"/>
</dbReference>
<dbReference type="InterPro" id="IPR000242">
    <property type="entry name" value="PTP_cat"/>
</dbReference>
<dbReference type="InterPro" id="IPR014392">
    <property type="entry name" value="PTP_non-rcpt_14/21"/>
</dbReference>
<dbReference type="InterPro" id="IPR041782">
    <property type="entry name" value="PTPN14/21_FERM_C"/>
</dbReference>
<dbReference type="InterPro" id="IPR016130">
    <property type="entry name" value="Tyr_Pase_AS"/>
</dbReference>
<dbReference type="InterPro" id="IPR003595">
    <property type="entry name" value="Tyr_Pase_cat"/>
</dbReference>
<dbReference type="InterPro" id="IPR000387">
    <property type="entry name" value="Tyr_Pase_dom"/>
</dbReference>
<dbReference type="InterPro" id="IPR029071">
    <property type="entry name" value="Ubiquitin-like_domsf"/>
</dbReference>
<dbReference type="PANTHER" id="PTHR45706">
    <property type="entry name" value="TYROSINE-PROTEIN PHOSPHATASE"/>
    <property type="match status" value="1"/>
</dbReference>
<dbReference type="PANTHER" id="PTHR45706:SF3">
    <property type="entry name" value="TYROSINE-PROTEIN PHOSPHATASE NON-RECEPTOR TYPE 21"/>
    <property type="match status" value="1"/>
</dbReference>
<dbReference type="Pfam" id="PF09380">
    <property type="entry name" value="FERM_C"/>
    <property type="match status" value="1"/>
</dbReference>
<dbReference type="Pfam" id="PF00373">
    <property type="entry name" value="FERM_M"/>
    <property type="match status" value="1"/>
</dbReference>
<dbReference type="Pfam" id="PF09379">
    <property type="entry name" value="FERM_N"/>
    <property type="match status" value="1"/>
</dbReference>
<dbReference type="Pfam" id="PF00102">
    <property type="entry name" value="Y_phosphatase"/>
    <property type="match status" value="1"/>
</dbReference>
<dbReference type="PIRSF" id="PIRSF000934">
    <property type="entry name" value="Tyr-Ptase_nr14"/>
    <property type="match status" value="1"/>
</dbReference>
<dbReference type="PRINTS" id="PR00935">
    <property type="entry name" value="BAND41"/>
</dbReference>
<dbReference type="PRINTS" id="PR00700">
    <property type="entry name" value="PRTYPHPHTASE"/>
</dbReference>
<dbReference type="SMART" id="SM00295">
    <property type="entry name" value="B41"/>
    <property type="match status" value="1"/>
</dbReference>
<dbReference type="SMART" id="SM01196">
    <property type="entry name" value="FERM_C"/>
    <property type="match status" value="1"/>
</dbReference>
<dbReference type="SMART" id="SM00194">
    <property type="entry name" value="PTPc"/>
    <property type="match status" value="1"/>
</dbReference>
<dbReference type="SMART" id="SM00404">
    <property type="entry name" value="PTPc_motif"/>
    <property type="match status" value="1"/>
</dbReference>
<dbReference type="SUPFAM" id="SSF52799">
    <property type="entry name" value="(Phosphotyrosine protein) phosphatases II"/>
    <property type="match status" value="1"/>
</dbReference>
<dbReference type="SUPFAM" id="SSF50729">
    <property type="entry name" value="PH domain-like"/>
    <property type="match status" value="1"/>
</dbReference>
<dbReference type="SUPFAM" id="SSF47031">
    <property type="entry name" value="Second domain of FERM"/>
    <property type="match status" value="1"/>
</dbReference>
<dbReference type="SUPFAM" id="SSF54236">
    <property type="entry name" value="Ubiquitin-like"/>
    <property type="match status" value="1"/>
</dbReference>
<dbReference type="PROSITE" id="PS00660">
    <property type="entry name" value="FERM_1"/>
    <property type="match status" value="1"/>
</dbReference>
<dbReference type="PROSITE" id="PS00661">
    <property type="entry name" value="FERM_2"/>
    <property type="match status" value="1"/>
</dbReference>
<dbReference type="PROSITE" id="PS50057">
    <property type="entry name" value="FERM_3"/>
    <property type="match status" value="1"/>
</dbReference>
<dbReference type="PROSITE" id="PS00383">
    <property type="entry name" value="TYR_PHOSPHATASE_1"/>
    <property type="match status" value="1"/>
</dbReference>
<dbReference type="PROSITE" id="PS50056">
    <property type="entry name" value="TYR_PHOSPHATASE_2"/>
    <property type="match status" value="1"/>
</dbReference>
<dbReference type="PROSITE" id="PS50055">
    <property type="entry name" value="TYR_PHOSPHATASE_PTP"/>
    <property type="match status" value="1"/>
</dbReference>
<evidence type="ECO:0000250" key="1"/>
<evidence type="ECO:0000250" key="2">
    <source>
        <dbReference type="UniProtKB" id="Q62136"/>
    </source>
</evidence>
<evidence type="ECO:0000255" key="3"/>
<evidence type="ECO:0000255" key="4">
    <source>
        <dbReference type="PROSITE-ProRule" id="PRU00084"/>
    </source>
</evidence>
<evidence type="ECO:0000255" key="5">
    <source>
        <dbReference type="PROSITE-ProRule" id="PRU00160"/>
    </source>
</evidence>
<evidence type="ECO:0000255" key="6">
    <source>
        <dbReference type="PROSITE-ProRule" id="PRU10044"/>
    </source>
</evidence>
<evidence type="ECO:0000256" key="7">
    <source>
        <dbReference type="SAM" id="MobiDB-lite"/>
    </source>
</evidence>
<evidence type="ECO:0000303" key="8">
    <source>
    </source>
</evidence>
<evidence type="ECO:0000305" key="9"/>
<evidence type="ECO:0007744" key="10">
    <source>
    </source>
</evidence>
<protein>
    <recommendedName>
        <fullName>Tyrosine-protein phosphatase non-receptor type 21</fullName>
        <ecNumber>3.1.3.48</ecNumber>
    </recommendedName>
    <alternativeName>
        <fullName>Protein-tyrosine phosphatase 2E</fullName>
    </alternativeName>
</protein>
<name>PTN21_RAT</name>
<keyword id="KW-0025">Alternative splicing</keyword>
<keyword id="KW-0963">Cytoplasm</keyword>
<keyword id="KW-0206">Cytoskeleton</keyword>
<keyword id="KW-0378">Hydrolase</keyword>
<keyword id="KW-0597">Phosphoprotein</keyword>
<keyword id="KW-0904">Protein phosphatase</keyword>
<keyword id="KW-1185">Reference proteome</keyword>
<comment type="catalytic activity">
    <reaction evidence="6">
        <text>O-phospho-L-tyrosyl-[protein] + H2O = L-tyrosyl-[protein] + phosphate</text>
        <dbReference type="Rhea" id="RHEA:10684"/>
        <dbReference type="Rhea" id="RHEA-COMP:10136"/>
        <dbReference type="Rhea" id="RHEA-COMP:20101"/>
        <dbReference type="ChEBI" id="CHEBI:15377"/>
        <dbReference type="ChEBI" id="CHEBI:43474"/>
        <dbReference type="ChEBI" id="CHEBI:46858"/>
        <dbReference type="ChEBI" id="CHEBI:61978"/>
        <dbReference type="EC" id="3.1.3.48"/>
    </reaction>
</comment>
<comment type="subcellular location">
    <subcellularLocation>
        <location evidence="1">Cytoplasm</location>
        <location evidence="1">Cytoskeleton</location>
    </subcellularLocation>
</comment>
<comment type="alternative products">
    <event type="alternative splicing"/>
    <isoform>
        <id>Q62728-1</id>
        <name>1</name>
        <sequence type="displayed"/>
    </isoform>
    <isoform>
        <id>Q62728-2</id>
        <name>2E</name>
        <sequence type="described" ref="VSP_000498"/>
    </isoform>
</comment>
<comment type="tissue specificity">
    <text>Particularly abundantly in adrenal glands.</text>
</comment>
<comment type="similarity">
    <text evidence="9">Belongs to the protein-tyrosine phosphatase family. Non-receptor class subfamily.</text>
</comment>
<sequence>MPLPFGLKLKRTRRYTVSSKSCLVARIQLLNNEFVEFTLSVESTGQESLEAVAQRLELREITYFSLWYYNKQNQRRWVDLEKPLKKQLDKHALEPTVYFGVVFYVPSVSQLQQEITRYQYYLQLKKDVLEGNLPCTLEQAIQLAGLAVQADFGDFDQYESQDFLQKFALLPVGWLQDEKLLEEAAQKVALLHQKYRGLTAPEAEMLYMQEVERMDGYGEESYPAKDSQGSDISIGACLDGIFVKHKNGRPPVVFRWHDIANMSHNKSFFALELANKEETIQFQTEDMETAKYVWRLCVARHKFYRLNQCNLQTQAATLNSVRRGSSSRMSLPKPQPYAMPPPPQLHYNGHYTEPFASSQDNVFVPNKNGFYCHSQTSLDRTQIDLSGRIRNGSVYSAHSTNSLNTPQPYLQPSPMSSNPSIPGSDVMRPDYIPSHRHSALIPPSYRPTPDYESVMKRLNRGMVHADRHSHSLRNLNIGSSYAYSRPDALVYSQPEIREHPHLASPQSAHYPFNLNYSFHSQAPYPYPVERRPVVGAVSVPELTNVQLQAQDYPAPNIMRTQVYRPPPPYPYPRPANSTPDLSRHLYISSSNPDLITRRVHHSVQTFQEDSLPVAHSLQEVSEPLTAARHAHLQKRNSIEIAGLTHGFEGLRLKEETMSASAADVAPRTFSAGSQSSVFSDKVKQEGTEEQGSGGYSHKKSLSDATMLIHSSEEDEDLEDDSSREHAVSEPRLTAAFSQEQQLNYPCASVTPVTGPLHIFEPKSHVTEPEKRAKDISPVHLVMETHQPRRHGLLTPSMSESDLTTSGRYRARRDSLKKRPVSDLLSGKKNTVEGLPPLGGMKKTRADAKKIGPLKLAALNGLSLSRLPLPDEGKEVSTRATNDERCKVLEQRLEQGTVFTEYERILKKRLVDGECSTARLPENAERNRFQDVLPYDDARVELVPTKENNTGYINASHIKVSVSGIEWDYIATQGPLQNTCQDFWQMVWEQGVAIIAMVTAEEEGGREKSFRYWPRLGSRHNTVTYGRFKITTRFRTDSGCYATTGLKMKHLLTGQERTVWHLQYTDWPEHGCPEDLKGFLSYLEEIQSVRRHTNSTSEPRSPNPPLLVHCSAGVGRTGVVILSEIMVACLEHNEVLDIPRVLELLRQQRMMLVQTLSQYTFVYRVLIQFLKSSRLI</sequence>